<keyword id="KW-0025">Alternative splicing</keyword>
<keyword id="KW-0597">Phosphoprotein</keyword>
<keyword id="KW-1185">Reference proteome</keyword>
<keyword id="KW-0727">SH2 domain</keyword>
<dbReference type="EMBL" id="AC007260">
    <property type="protein sequence ID" value="AAD30582.1"/>
    <property type="status" value="ALT_SEQ"/>
    <property type="molecule type" value="Genomic_DNA"/>
</dbReference>
<dbReference type="EMBL" id="CP002684">
    <property type="protein sequence ID" value="AEE36118.1"/>
    <property type="molecule type" value="Genomic_DNA"/>
</dbReference>
<dbReference type="EMBL" id="CP002684">
    <property type="protein sequence ID" value="AEE36119.1"/>
    <property type="molecule type" value="Genomic_DNA"/>
</dbReference>
<dbReference type="EMBL" id="CP002684">
    <property type="protein sequence ID" value="ANM60040.1"/>
    <property type="molecule type" value="Genomic_DNA"/>
</dbReference>
<dbReference type="EMBL" id="AK221532">
    <property type="protein sequence ID" value="BAD94855.1"/>
    <property type="molecule type" value="mRNA"/>
</dbReference>
<dbReference type="PIR" id="H96813">
    <property type="entry name" value="H96813"/>
</dbReference>
<dbReference type="RefSeq" id="NP_001185427.1">
    <molecule id="Q56XZ1-2"/>
    <property type="nucleotide sequence ID" value="NM_001198498.1"/>
</dbReference>
<dbReference type="RefSeq" id="NP_001322353.1">
    <molecule id="Q56XZ1-3"/>
    <property type="nucleotide sequence ID" value="NM_001334830.1"/>
</dbReference>
<dbReference type="RefSeq" id="NP_177975.3">
    <molecule id="Q56XZ1-1"/>
    <property type="nucleotide sequence ID" value="NM_106501.5"/>
</dbReference>
<dbReference type="FunCoup" id="Q56XZ1">
    <property type="interactions" value="1068"/>
</dbReference>
<dbReference type="STRING" id="3702.Q56XZ1"/>
<dbReference type="PaxDb" id="3702-AT1G78540.2"/>
<dbReference type="ProteomicsDB" id="234575">
    <molecule id="Q56XZ1-1"/>
</dbReference>
<dbReference type="EnsemblPlants" id="AT1G78540.1">
    <molecule id="Q56XZ1-1"/>
    <property type="protein sequence ID" value="AT1G78540.1"/>
    <property type="gene ID" value="AT1G78540"/>
</dbReference>
<dbReference type="EnsemblPlants" id="AT1G78540.2">
    <molecule id="Q56XZ1-2"/>
    <property type="protein sequence ID" value="AT1G78540.2"/>
    <property type="gene ID" value="AT1G78540"/>
</dbReference>
<dbReference type="EnsemblPlants" id="AT1G78540.3">
    <molecule id="Q56XZ1-3"/>
    <property type="protein sequence ID" value="AT1G78540.3"/>
    <property type="gene ID" value="AT1G78540"/>
</dbReference>
<dbReference type="GeneID" id="844190"/>
<dbReference type="Gramene" id="AT1G78540.1">
    <molecule id="Q56XZ1-1"/>
    <property type="protein sequence ID" value="AT1G78540.1"/>
    <property type="gene ID" value="AT1G78540"/>
</dbReference>
<dbReference type="Gramene" id="AT1G78540.2">
    <molecule id="Q56XZ1-2"/>
    <property type="protein sequence ID" value="AT1G78540.2"/>
    <property type="gene ID" value="AT1G78540"/>
</dbReference>
<dbReference type="Gramene" id="AT1G78540.3">
    <molecule id="Q56XZ1-3"/>
    <property type="protein sequence ID" value="AT1G78540.3"/>
    <property type="gene ID" value="AT1G78540"/>
</dbReference>
<dbReference type="KEGG" id="ath:AT1G78540"/>
<dbReference type="Araport" id="AT1G78540"/>
<dbReference type="TAIR" id="AT1G78540">
    <property type="gene designation" value="SHB"/>
</dbReference>
<dbReference type="eggNOG" id="ENOG502QRR2">
    <property type="taxonomic scope" value="Eukaryota"/>
</dbReference>
<dbReference type="HOGENOM" id="CLU_014741_0_0_1"/>
<dbReference type="InParanoid" id="Q56XZ1"/>
<dbReference type="OMA" id="CYEYVTQ"/>
<dbReference type="OrthoDB" id="10263919at2759"/>
<dbReference type="PhylomeDB" id="Q56XZ1"/>
<dbReference type="PRO" id="PR:Q56XZ1"/>
<dbReference type="Proteomes" id="UP000006548">
    <property type="component" value="Chromosome 1"/>
</dbReference>
<dbReference type="ExpressionAtlas" id="Q56XZ1">
    <property type="expression patterns" value="baseline and differential"/>
</dbReference>
<dbReference type="GO" id="GO:0003700">
    <property type="term" value="F:DNA-binding transcription factor activity"/>
    <property type="evidence" value="ECO:0007669"/>
    <property type="project" value="InterPro"/>
</dbReference>
<dbReference type="GO" id="GO:0007165">
    <property type="term" value="P:signal transduction"/>
    <property type="evidence" value="ECO:0007669"/>
    <property type="project" value="InterPro"/>
</dbReference>
<dbReference type="CDD" id="cd10338">
    <property type="entry name" value="SH2_SHA"/>
    <property type="match status" value="1"/>
</dbReference>
<dbReference type="Gene3D" id="2.60.120.200">
    <property type="match status" value="1"/>
</dbReference>
<dbReference type="Gene3D" id="3.30.505.10">
    <property type="entry name" value="SH2 domain"/>
    <property type="match status" value="1"/>
</dbReference>
<dbReference type="InterPro" id="IPR013320">
    <property type="entry name" value="ConA-like_dom_sf"/>
</dbReference>
<dbReference type="InterPro" id="IPR000980">
    <property type="entry name" value="SH2"/>
</dbReference>
<dbReference type="InterPro" id="IPR036860">
    <property type="entry name" value="SH2_dom_sf"/>
</dbReference>
<dbReference type="InterPro" id="IPR001217">
    <property type="entry name" value="STAT"/>
</dbReference>
<dbReference type="PANTHER" id="PTHR11801">
    <property type="entry name" value="SIGNAL TRANSDUCER AND ACTIVATOR OF TRANSCRIPTION"/>
    <property type="match status" value="1"/>
</dbReference>
<dbReference type="SUPFAM" id="SSF49899">
    <property type="entry name" value="Concanavalin A-like lectins/glucanases"/>
    <property type="match status" value="1"/>
</dbReference>
<dbReference type="SUPFAM" id="SSF55550">
    <property type="entry name" value="SH2 domain"/>
    <property type="match status" value="1"/>
</dbReference>
<dbReference type="PROSITE" id="PS50001">
    <property type="entry name" value="SH2"/>
    <property type="match status" value="1"/>
</dbReference>
<evidence type="ECO:0000255" key="1">
    <source>
        <dbReference type="PROSITE-ProRule" id="PRU00191"/>
    </source>
</evidence>
<evidence type="ECO:0000256" key="2">
    <source>
        <dbReference type="SAM" id="MobiDB-lite"/>
    </source>
</evidence>
<evidence type="ECO:0000269" key="3">
    <source>
    </source>
</evidence>
<evidence type="ECO:0000303" key="4">
    <source>
    </source>
</evidence>
<evidence type="ECO:0000303" key="5">
    <source>
    </source>
</evidence>
<evidence type="ECO:0000305" key="6"/>
<evidence type="ECO:0000312" key="7">
    <source>
        <dbReference type="Araport" id="AT1G78540"/>
    </source>
</evidence>
<evidence type="ECO:0000312" key="8">
    <source>
        <dbReference type="EMBL" id="AAD30582.1"/>
    </source>
</evidence>
<organism>
    <name type="scientific">Arabidopsis thaliana</name>
    <name type="common">Mouse-ear cress</name>
    <dbReference type="NCBI Taxonomy" id="3702"/>
    <lineage>
        <taxon>Eukaryota</taxon>
        <taxon>Viridiplantae</taxon>
        <taxon>Streptophyta</taxon>
        <taxon>Embryophyta</taxon>
        <taxon>Tracheophyta</taxon>
        <taxon>Spermatophyta</taxon>
        <taxon>Magnoliopsida</taxon>
        <taxon>eudicotyledons</taxon>
        <taxon>Gunneridae</taxon>
        <taxon>Pentapetalae</taxon>
        <taxon>rosids</taxon>
        <taxon>malvids</taxon>
        <taxon>Brassicales</taxon>
        <taxon>Brassicaceae</taxon>
        <taxon>Camelineae</taxon>
        <taxon>Arabidopsis</taxon>
    </lineage>
</organism>
<gene>
    <name evidence="4" type="primary">SHB</name>
    <name evidence="5" type="synonym">STATLB</name>
    <name evidence="7" type="ordered locus">At1g78540</name>
    <name evidence="8" type="ORF">T30F21.13</name>
</gene>
<sequence length="668" mass="75812">MASAATIETEKYSLLEDFNVDVEVDDEEYESFSLCFWVYLLNSTTFPSTIIRQVHSDMSVSAPFLVLDENKKMMLLPLTLLHKEAPDPVDTSSWTQVPSVSTKSKFPLEKWVHVGCEVSRNFMRLFIDGNMEGEQFVTSLLTKNAYPECPRKISLFSVGGDGYSVQGFIQCAEVLPASDHVEHHYMKDPPLMLSVNKSSSSGIKLDDCGVWQASCKEMFSLDVLLSNAIGQPVHKDVEVVASLLYADTLPEAKMGEAEAPLLIRDEGVQFSSDDRPIKLLNGRSSFKLKISQLSSNSDDRLFWIKFGIRNAKDYPFLQAVSNPIRCISVSPEVQPVSVTPKRLTNIDHLSSTESPDLLQNTSSVKRIRLGKESVSGSEESYQQCNSHPQTSRQFENGNGMRLHEEDNSSIDSENSEMRYTISDSTIFKYCLGNLIDKALLLKEITNNSSDDEVLEFANQVSLYSGCSHHSYQINMARELIAEGTNAWILISRNNQHVHWDNVVYEIEEHFMRISKCSSRSLTHQDFELLRRISGCYEYITQENFEKMWCWLFPVAYSISRGLINGMWRSSSPKWIEGFITKEEAEHSLQGQEPGTFILRFPISRTWPHPDAGSLVVTYVGHDFALHHKQLKIDNICESSERYMDAKPLQDMLLAEPELSRLGRIKRSH</sequence>
<reference key="1">
    <citation type="journal article" date="2000" name="Nature">
        <title>Sequence and analysis of chromosome 1 of the plant Arabidopsis thaliana.</title>
        <authorList>
            <person name="Theologis A."/>
            <person name="Ecker J.R."/>
            <person name="Palm C.J."/>
            <person name="Federspiel N.A."/>
            <person name="Kaul S."/>
            <person name="White O."/>
            <person name="Alonso J."/>
            <person name="Altafi H."/>
            <person name="Araujo R."/>
            <person name="Bowman C.L."/>
            <person name="Brooks S.Y."/>
            <person name="Buehler E."/>
            <person name="Chan A."/>
            <person name="Chao Q."/>
            <person name="Chen H."/>
            <person name="Cheuk R.F."/>
            <person name="Chin C.W."/>
            <person name="Chung M.K."/>
            <person name="Conn L."/>
            <person name="Conway A.B."/>
            <person name="Conway A.R."/>
            <person name="Creasy T.H."/>
            <person name="Dewar K."/>
            <person name="Dunn P."/>
            <person name="Etgu P."/>
            <person name="Feldblyum T.V."/>
            <person name="Feng J.-D."/>
            <person name="Fong B."/>
            <person name="Fujii C.Y."/>
            <person name="Gill J.E."/>
            <person name="Goldsmith A.D."/>
            <person name="Haas B."/>
            <person name="Hansen N.F."/>
            <person name="Hughes B."/>
            <person name="Huizar L."/>
            <person name="Hunter J.L."/>
            <person name="Jenkins J."/>
            <person name="Johnson-Hopson C."/>
            <person name="Khan S."/>
            <person name="Khaykin E."/>
            <person name="Kim C.J."/>
            <person name="Koo H.L."/>
            <person name="Kremenetskaia I."/>
            <person name="Kurtz D.B."/>
            <person name="Kwan A."/>
            <person name="Lam B."/>
            <person name="Langin-Hooper S."/>
            <person name="Lee A."/>
            <person name="Lee J.M."/>
            <person name="Lenz C.A."/>
            <person name="Li J.H."/>
            <person name="Li Y.-P."/>
            <person name="Lin X."/>
            <person name="Liu S.X."/>
            <person name="Liu Z.A."/>
            <person name="Luros J.S."/>
            <person name="Maiti R."/>
            <person name="Marziali A."/>
            <person name="Militscher J."/>
            <person name="Miranda M."/>
            <person name="Nguyen M."/>
            <person name="Nierman W.C."/>
            <person name="Osborne B.I."/>
            <person name="Pai G."/>
            <person name="Peterson J."/>
            <person name="Pham P.K."/>
            <person name="Rizzo M."/>
            <person name="Rooney T."/>
            <person name="Rowley D."/>
            <person name="Sakano H."/>
            <person name="Salzberg S.L."/>
            <person name="Schwartz J.R."/>
            <person name="Shinn P."/>
            <person name="Southwick A.M."/>
            <person name="Sun H."/>
            <person name="Tallon L.J."/>
            <person name="Tambunga G."/>
            <person name="Toriumi M.J."/>
            <person name="Town C.D."/>
            <person name="Utterback T."/>
            <person name="Van Aken S."/>
            <person name="Vaysberg M."/>
            <person name="Vysotskaia V.S."/>
            <person name="Walker M."/>
            <person name="Wu D."/>
            <person name="Yu G."/>
            <person name="Fraser C.M."/>
            <person name="Venter J.C."/>
            <person name="Davis R.W."/>
        </authorList>
    </citation>
    <scope>NUCLEOTIDE SEQUENCE [LARGE SCALE GENOMIC DNA]</scope>
    <source>
        <strain>cv. Columbia</strain>
    </source>
</reference>
<reference key="2">
    <citation type="journal article" date="2017" name="Plant J.">
        <title>Araport11: a complete reannotation of the Arabidopsis thaliana reference genome.</title>
        <authorList>
            <person name="Cheng C.Y."/>
            <person name="Krishnakumar V."/>
            <person name="Chan A.P."/>
            <person name="Thibaud-Nissen F."/>
            <person name="Schobel S."/>
            <person name="Town C.D."/>
        </authorList>
    </citation>
    <scope>GENOME REANNOTATION</scope>
    <source>
        <strain>cv. Columbia</strain>
    </source>
</reference>
<reference key="3">
    <citation type="submission" date="2005-03" db="EMBL/GenBank/DDBJ databases">
        <title>Large-scale analysis of RIKEN Arabidopsis full-length (RAFL) cDNAs.</title>
        <authorList>
            <person name="Totoki Y."/>
            <person name="Seki M."/>
            <person name="Ishida J."/>
            <person name="Nakajima M."/>
            <person name="Enju A."/>
            <person name="Kamiya A."/>
            <person name="Narusaka M."/>
            <person name="Shin-i T."/>
            <person name="Nakagawa M."/>
            <person name="Sakamoto N."/>
            <person name="Oishi K."/>
            <person name="Kohara Y."/>
            <person name="Kobayashi M."/>
            <person name="Toyoda A."/>
            <person name="Sakaki Y."/>
            <person name="Sakurai T."/>
            <person name="Iida K."/>
            <person name="Akiyama K."/>
            <person name="Satou M."/>
            <person name="Toyoda T."/>
            <person name="Konagaya A."/>
            <person name="Carninci P."/>
            <person name="Kawai J."/>
            <person name="Hayashizaki Y."/>
            <person name="Shinozaki K."/>
        </authorList>
    </citation>
    <scope>NUCLEOTIDE SEQUENCE [LARGE SCALE MRNA] (ISOFORM 1)</scope>
    <source>
        <strain>cv. Columbia</strain>
    </source>
</reference>
<reference key="4">
    <citation type="journal article" date="2004" name="Mol. Cell. Proteomics">
        <title>Identification of the linker-SH2 domain of STAT as the origin of the SH2 domain using two-dimensional structural alignment.</title>
        <authorList>
            <person name="Gao Q."/>
            <person name="Hua J."/>
            <person name="Kimura R."/>
            <person name="Headd J.J."/>
            <person name="Fu X.-Y."/>
            <person name="Chin Y.E."/>
        </authorList>
    </citation>
    <scope>TISSUE SPECIFICITY</scope>
    <scope>PHOSPHORYLATION AT TYROSINE RESIDUES</scope>
    <source>
        <strain>cv. Columbia</strain>
    </source>
</reference>
<reference key="5">
    <citation type="journal article" date="2004" name="Trends Plant Sci.">
        <title>SH2 domains in plants imply new signalling scenarios.</title>
        <authorList>
            <person name="Williams J.G."/>
            <person name="Zvelebil M."/>
        </authorList>
    </citation>
    <scope>GENE FAMILY</scope>
</reference>
<reference key="6">
    <citation type="journal article" date="2008" name="Development">
        <title>A new family of transcription factors.</title>
        <authorList>
            <person name="Yamada Y."/>
            <person name="Wang H.Y."/>
            <person name="Fukuzawa M."/>
            <person name="Barton G.J."/>
            <person name="Williams J.G."/>
        </authorList>
    </citation>
    <scope>GENE FAMILY</scope>
</reference>
<feature type="chain" id="PRO_0000441176" description="SH2 domain-containing protein B">
    <location>
        <begin position="1"/>
        <end position="668"/>
    </location>
</feature>
<feature type="domain" description="SH2" evidence="1">
    <location>
        <begin position="574"/>
        <end position="642"/>
    </location>
</feature>
<feature type="region of interest" description="Disordered" evidence="2">
    <location>
        <begin position="373"/>
        <end position="411"/>
    </location>
</feature>
<feature type="compositionally biased region" description="Polar residues" evidence="2">
    <location>
        <begin position="374"/>
        <end position="396"/>
    </location>
</feature>
<feature type="splice variant" id="VSP_059038" description="In isoform 3.">
    <location>
        <begin position="638"/>
        <end position="668"/>
    </location>
</feature>
<feature type="splice variant" id="VSP_059039" description="In isoform 2.">
    <original>IKRSH</original>
    <variation>NVVLLWIFVCAGSKEATECYAFSNIQTLNLSYS</variation>
    <location>
        <begin position="664"/>
        <end position="668"/>
    </location>
</feature>
<name>SHB_ARATH</name>
<proteinExistence type="evidence at protein level"/>
<protein>
    <recommendedName>
        <fullName evidence="4">SH2 domain-containing protein B</fullName>
        <shortName evidence="4">AtSHB</shortName>
    </recommendedName>
    <alternativeName>
        <fullName evidence="5">STAT-type linker-SH2 domain factor B</fullName>
    </alternativeName>
</protein>
<accession>Q56XZ1</accession>
<accession>A0A1P8ATT7</accession>
<accession>F4IA94</accession>
<accession>Q9SYM8</accession>
<comment type="alternative products">
    <event type="alternative splicing"/>
    <isoform>
        <id>Q56XZ1-1</id>
        <name>1</name>
        <sequence type="displayed"/>
    </isoform>
    <isoform>
        <id>Q56XZ1-2</id>
        <name>2</name>
        <sequence type="described" ref="VSP_059039"/>
    </isoform>
    <isoform>
        <id>Q56XZ1-3</id>
        <name>3</name>
        <sequence type="described" ref="VSP_059038"/>
    </isoform>
</comment>
<comment type="tissue specificity">
    <text evidence="3">Expressed in roots, leaves, stems and flowers.</text>
</comment>
<comment type="PTM">
    <text evidence="3">Phosphorylated on tyrosine residues.</text>
</comment>
<comment type="sequence caution" evidence="6">
    <conflict type="erroneous gene model prediction">
        <sequence resource="EMBL-CDS" id="AAD30582"/>
    </conflict>
</comment>